<dbReference type="EMBL" id="CP000082">
    <property type="protein sequence ID" value="AAZ18368.1"/>
    <property type="molecule type" value="Genomic_DNA"/>
</dbReference>
<dbReference type="RefSeq" id="WP_011279801.1">
    <property type="nucleotide sequence ID" value="NC_007204.1"/>
</dbReference>
<dbReference type="SMR" id="Q4FUE0"/>
<dbReference type="STRING" id="259536.Psyc_0505"/>
<dbReference type="KEGG" id="par:Psyc_0505"/>
<dbReference type="eggNOG" id="COG0256">
    <property type="taxonomic scope" value="Bacteria"/>
</dbReference>
<dbReference type="HOGENOM" id="CLU_098841_0_1_6"/>
<dbReference type="OrthoDB" id="9810939at2"/>
<dbReference type="Proteomes" id="UP000000546">
    <property type="component" value="Chromosome"/>
</dbReference>
<dbReference type="GO" id="GO:0022625">
    <property type="term" value="C:cytosolic large ribosomal subunit"/>
    <property type="evidence" value="ECO:0007669"/>
    <property type="project" value="TreeGrafter"/>
</dbReference>
<dbReference type="GO" id="GO:0008097">
    <property type="term" value="F:5S rRNA binding"/>
    <property type="evidence" value="ECO:0007669"/>
    <property type="project" value="TreeGrafter"/>
</dbReference>
<dbReference type="GO" id="GO:0003735">
    <property type="term" value="F:structural constituent of ribosome"/>
    <property type="evidence" value="ECO:0007669"/>
    <property type="project" value="InterPro"/>
</dbReference>
<dbReference type="GO" id="GO:0006412">
    <property type="term" value="P:translation"/>
    <property type="evidence" value="ECO:0007669"/>
    <property type="project" value="UniProtKB-UniRule"/>
</dbReference>
<dbReference type="CDD" id="cd00432">
    <property type="entry name" value="Ribosomal_L18_L5e"/>
    <property type="match status" value="1"/>
</dbReference>
<dbReference type="FunFam" id="3.30.420.100:FF:000001">
    <property type="entry name" value="50S ribosomal protein L18"/>
    <property type="match status" value="1"/>
</dbReference>
<dbReference type="Gene3D" id="3.30.420.100">
    <property type="match status" value="1"/>
</dbReference>
<dbReference type="HAMAP" id="MF_01337_B">
    <property type="entry name" value="Ribosomal_uL18_B"/>
    <property type="match status" value="1"/>
</dbReference>
<dbReference type="InterPro" id="IPR004389">
    <property type="entry name" value="Ribosomal_uL18_bac-type"/>
</dbReference>
<dbReference type="InterPro" id="IPR005484">
    <property type="entry name" value="Ribosomal_uL18_bac/euk"/>
</dbReference>
<dbReference type="NCBIfam" id="TIGR00060">
    <property type="entry name" value="L18_bact"/>
    <property type="match status" value="1"/>
</dbReference>
<dbReference type="PANTHER" id="PTHR12899">
    <property type="entry name" value="39S RIBOSOMAL PROTEIN L18, MITOCHONDRIAL"/>
    <property type="match status" value="1"/>
</dbReference>
<dbReference type="PANTHER" id="PTHR12899:SF3">
    <property type="entry name" value="LARGE RIBOSOMAL SUBUNIT PROTEIN UL18M"/>
    <property type="match status" value="1"/>
</dbReference>
<dbReference type="Pfam" id="PF00861">
    <property type="entry name" value="Ribosomal_L18p"/>
    <property type="match status" value="1"/>
</dbReference>
<dbReference type="SUPFAM" id="SSF53137">
    <property type="entry name" value="Translational machinery components"/>
    <property type="match status" value="1"/>
</dbReference>
<keyword id="KW-1185">Reference proteome</keyword>
<keyword id="KW-0687">Ribonucleoprotein</keyword>
<keyword id="KW-0689">Ribosomal protein</keyword>
<keyword id="KW-0694">RNA-binding</keyword>
<keyword id="KW-0699">rRNA-binding</keyword>
<organism>
    <name type="scientific">Psychrobacter arcticus (strain DSM 17307 / VKM B-2377 / 273-4)</name>
    <dbReference type="NCBI Taxonomy" id="259536"/>
    <lineage>
        <taxon>Bacteria</taxon>
        <taxon>Pseudomonadati</taxon>
        <taxon>Pseudomonadota</taxon>
        <taxon>Gammaproteobacteria</taxon>
        <taxon>Moraxellales</taxon>
        <taxon>Moraxellaceae</taxon>
        <taxon>Psychrobacter</taxon>
    </lineage>
</organism>
<evidence type="ECO:0000255" key="1">
    <source>
        <dbReference type="HAMAP-Rule" id="MF_01337"/>
    </source>
</evidence>
<evidence type="ECO:0000305" key="2"/>
<name>RL18_PSYA2</name>
<protein>
    <recommendedName>
        <fullName evidence="1">Large ribosomal subunit protein uL18</fullName>
    </recommendedName>
    <alternativeName>
        <fullName evidence="2">50S ribosomal protein L18</fullName>
    </alternativeName>
</protein>
<accession>Q4FUE0</accession>
<feature type="chain" id="PRO_0000251349" description="Large ribosomal subunit protein uL18">
    <location>
        <begin position="1"/>
        <end position="116"/>
    </location>
</feature>
<gene>
    <name evidence="1" type="primary">rplR</name>
    <name type="ordered locus">Psyc_0505</name>
</gene>
<reference key="1">
    <citation type="journal article" date="2010" name="Appl. Environ. Microbiol.">
        <title>The genome sequence of Psychrobacter arcticus 273-4, a psychroactive Siberian permafrost bacterium, reveals mechanisms for adaptation to low-temperature growth.</title>
        <authorList>
            <person name="Ayala-del-Rio H.L."/>
            <person name="Chain P.S."/>
            <person name="Grzymski J.J."/>
            <person name="Ponder M.A."/>
            <person name="Ivanova N."/>
            <person name="Bergholz P.W."/>
            <person name="Di Bartolo G."/>
            <person name="Hauser L."/>
            <person name="Land M."/>
            <person name="Bakermans C."/>
            <person name="Rodrigues D."/>
            <person name="Klappenbach J."/>
            <person name="Zarka D."/>
            <person name="Larimer F."/>
            <person name="Richardson P."/>
            <person name="Murray A."/>
            <person name="Thomashow M."/>
            <person name="Tiedje J.M."/>
        </authorList>
    </citation>
    <scope>NUCLEOTIDE SEQUENCE [LARGE SCALE GENOMIC DNA]</scope>
    <source>
        <strain>DSM 17307 / VKM B-2377 / 273-4</strain>
    </source>
</reference>
<sequence length="116" mass="12576">MFDKKAARLRRAKKTRAHIRFLGVHRLTVNRTPRHIYAQIISPNGGEVIAQASTLDSSLRSGATGNADAATSVGQMIAERAKAAGITKVAFDRSGFKYHGRVKALAEAARENGLEF</sequence>
<comment type="function">
    <text evidence="1">This is one of the proteins that bind and probably mediate the attachment of the 5S RNA into the large ribosomal subunit, where it forms part of the central protuberance.</text>
</comment>
<comment type="subunit">
    <text evidence="1">Part of the 50S ribosomal subunit; part of the 5S rRNA/L5/L18/L25 subcomplex. Contacts the 5S and 23S rRNAs.</text>
</comment>
<comment type="similarity">
    <text evidence="1">Belongs to the universal ribosomal protein uL18 family.</text>
</comment>
<proteinExistence type="inferred from homology"/>